<organism>
    <name type="scientific">Arabidopsis thaliana</name>
    <name type="common">Mouse-ear cress</name>
    <dbReference type="NCBI Taxonomy" id="3702"/>
    <lineage>
        <taxon>Eukaryota</taxon>
        <taxon>Viridiplantae</taxon>
        <taxon>Streptophyta</taxon>
        <taxon>Embryophyta</taxon>
        <taxon>Tracheophyta</taxon>
        <taxon>Spermatophyta</taxon>
        <taxon>Magnoliopsida</taxon>
        <taxon>eudicotyledons</taxon>
        <taxon>Gunneridae</taxon>
        <taxon>Pentapetalae</taxon>
        <taxon>rosids</taxon>
        <taxon>malvids</taxon>
        <taxon>Brassicales</taxon>
        <taxon>Brassicaceae</taxon>
        <taxon>Camelineae</taxon>
        <taxon>Arabidopsis</taxon>
    </lineage>
</organism>
<sequence>MSYNTGKESSPVSPLKKRRASWSELWVNHHHLLSSSPLDLAAKFQSLTPPISKSKTLLPDFTLLLPDLILIRVIQKIPNSQRKNLSLVCKRWFRLHGRLVRSFKVSDWEFLSSGRLISRFPNLETVDLVSGCLISPPNLGILVNHRIVSFTVGVGSYQSWSFFEENLLSVELVERGLKALAGGCSNLRKLVVTNTSELGLLNVAEECSRLQELELHKCSDSVLLGIGAFENLQILRLVGNVDGLYNSLVSDIGLMILAQGCKRLVKLELVGCEGGFDGIKEIGECCQMLEELTVCDNKMESGWLGGLRYCENLKTLKLVSCKKIDNDPDESLSCCCPALERLQLEKCQLRDKNTVKALFKMCEAAREIVFQDCWGLDNDIFSLAMAFGRVKLLYLEGCSLLTTSGLESVILHWHELEHLKVVSCKNIKDSEVSPSLSALFSALVELQWRPDTRSHLSSSLTGTGIGEKGGKFFKKT</sequence>
<keyword id="KW-1185">Reference proteome</keyword>
<dbReference type="EMBL" id="AB010070">
    <property type="protein sequence ID" value="BAB11445.1"/>
    <property type="status" value="ALT_SEQ"/>
    <property type="molecule type" value="Genomic_DNA"/>
</dbReference>
<dbReference type="EMBL" id="CP002688">
    <property type="protein sequence ID" value="AED91191.1"/>
    <property type="molecule type" value="Genomic_DNA"/>
</dbReference>
<dbReference type="EMBL" id="AY070039">
    <property type="protein sequence ID" value="AAL49796.1"/>
    <property type="molecule type" value="mRNA"/>
</dbReference>
<dbReference type="EMBL" id="AY096547">
    <property type="protein sequence ID" value="AAM20197.1"/>
    <property type="molecule type" value="mRNA"/>
</dbReference>
<dbReference type="RefSeq" id="NP_196384.2">
    <property type="nucleotide sequence ID" value="NM_120849.4"/>
</dbReference>
<dbReference type="SMR" id="Q8VYT5"/>
<dbReference type="FunCoup" id="Q8VYT5">
    <property type="interactions" value="191"/>
</dbReference>
<dbReference type="STRING" id="3702.Q8VYT5"/>
<dbReference type="iPTMnet" id="Q8VYT5"/>
<dbReference type="PaxDb" id="3702-AT5G07670.1"/>
<dbReference type="ProteomicsDB" id="222403"/>
<dbReference type="EnsemblPlants" id="AT5G07670.1">
    <property type="protein sequence ID" value="AT5G07670.1"/>
    <property type="gene ID" value="AT5G07670"/>
</dbReference>
<dbReference type="GeneID" id="830660"/>
<dbReference type="Gramene" id="AT5G07670.1">
    <property type="protein sequence ID" value="AT5G07670.1"/>
    <property type="gene ID" value="AT5G07670"/>
</dbReference>
<dbReference type="KEGG" id="ath:AT5G07670"/>
<dbReference type="Araport" id="AT5G07670"/>
<dbReference type="TAIR" id="AT5G07670"/>
<dbReference type="eggNOG" id="KOG1947">
    <property type="taxonomic scope" value="Eukaryota"/>
</dbReference>
<dbReference type="HOGENOM" id="CLU_039683_0_0_1"/>
<dbReference type="InParanoid" id="Q8VYT5"/>
<dbReference type="OMA" id="FSDHRMD"/>
<dbReference type="PhylomeDB" id="Q8VYT5"/>
<dbReference type="PRO" id="PR:Q8VYT5"/>
<dbReference type="Proteomes" id="UP000006548">
    <property type="component" value="Chromosome 5"/>
</dbReference>
<dbReference type="ExpressionAtlas" id="Q8VYT5">
    <property type="expression patterns" value="baseline and differential"/>
</dbReference>
<dbReference type="Gene3D" id="3.80.10.10">
    <property type="entry name" value="Ribonuclease Inhibitor"/>
    <property type="match status" value="1"/>
</dbReference>
<dbReference type="InterPro" id="IPR036047">
    <property type="entry name" value="F-box-like_dom_sf"/>
</dbReference>
<dbReference type="InterPro" id="IPR001810">
    <property type="entry name" value="F-box_dom"/>
</dbReference>
<dbReference type="InterPro" id="IPR032675">
    <property type="entry name" value="LRR_dom_sf"/>
</dbReference>
<dbReference type="PANTHER" id="PTHR13318:SF124">
    <property type="entry name" value="F-BOX DOMAIN-CONTAINING PROTEIN"/>
    <property type="match status" value="1"/>
</dbReference>
<dbReference type="PANTHER" id="PTHR13318">
    <property type="entry name" value="PARTNER OF PAIRED, ISOFORM B-RELATED"/>
    <property type="match status" value="1"/>
</dbReference>
<dbReference type="SUPFAM" id="SSF81383">
    <property type="entry name" value="F-box domain"/>
    <property type="match status" value="1"/>
</dbReference>
<dbReference type="SUPFAM" id="SSF52047">
    <property type="entry name" value="RNI-like"/>
    <property type="match status" value="2"/>
</dbReference>
<dbReference type="PROSITE" id="PS50181">
    <property type="entry name" value="FBOX"/>
    <property type="match status" value="1"/>
</dbReference>
<feature type="chain" id="PRO_0000283521" description="F-box protein At5g07670">
    <location>
        <begin position="1"/>
        <end position="476"/>
    </location>
</feature>
<feature type="domain" description="F-box" evidence="1">
    <location>
        <begin position="59"/>
        <end position="111"/>
    </location>
</feature>
<accession>Q8VYT5</accession>
<accession>Q9FLR4</accession>
<gene>
    <name type="ordered locus">At5g07670</name>
    <name type="ORF">MBK20.11</name>
</gene>
<comment type="sequence caution" evidence="2">
    <conflict type="erroneous gene model prediction">
        <sequence resource="EMBL-CDS" id="BAB11445"/>
    </conflict>
</comment>
<name>FB254_ARATH</name>
<reference key="1">
    <citation type="journal article" date="1998" name="DNA Res.">
        <title>Structural analysis of Arabidopsis thaliana chromosome 5. IV. Sequence features of the regions of 1,456,315 bp covered by nineteen physically assigned P1 and TAC clones.</title>
        <authorList>
            <person name="Sato S."/>
            <person name="Kaneko T."/>
            <person name="Kotani H."/>
            <person name="Nakamura Y."/>
            <person name="Asamizu E."/>
            <person name="Miyajima N."/>
            <person name="Tabata S."/>
        </authorList>
    </citation>
    <scope>NUCLEOTIDE SEQUENCE [LARGE SCALE GENOMIC DNA]</scope>
    <source>
        <strain>cv. Columbia</strain>
    </source>
</reference>
<reference key="2">
    <citation type="journal article" date="2017" name="Plant J.">
        <title>Araport11: a complete reannotation of the Arabidopsis thaliana reference genome.</title>
        <authorList>
            <person name="Cheng C.Y."/>
            <person name="Krishnakumar V."/>
            <person name="Chan A.P."/>
            <person name="Thibaud-Nissen F."/>
            <person name="Schobel S."/>
            <person name="Town C.D."/>
        </authorList>
    </citation>
    <scope>GENOME REANNOTATION</scope>
    <source>
        <strain>cv. Columbia</strain>
    </source>
</reference>
<reference key="3">
    <citation type="journal article" date="2003" name="Science">
        <title>Empirical analysis of transcriptional activity in the Arabidopsis genome.</title>
        <authorList>
            <person name="Yamada K."/>
            <person name="Lim J."/>
            <person name="Dale J.M."/>
            <person name="Chen H."/>
            <person name="Shinn P."/>
            <person name="Palm C.J."/>
            <person name="Southwick A.M."/>
            <person name="Wu H.C."/>
            <person name="Kim C.J."/>
            <person name="Nguyen M."/>
            <person name="Pham P.K."/>
            <person name="Cheuk R.F."/>
            <person name="Karlin-Newmann G."/>
            <person name="Liu S.X."/>
            <person name="Lam B."/>
            <person name="Sakano H."/>
            <person name="Wu T."/>
            <person name="Yu G."/>
            <person name="Miranda M."/>
            <person name="Quach H.L."/>
            <person name="Tripp M."/>
            <person name="Chang C.H."/>
            <person name="Lee J.M."/>
            <person name="Toriumi M.J."/>
            <person name="Chan M.M."/>
            <person name="Tang C.C."/>
            <person name="Onodera C.S."/>
            <person name="Deng J.M."/>
            <person name="Akiyama K."/>
            <person name="Ansari Y."/>
            <person name="Arakawa T."/>
            <person name="Banh J."/>
            <person name="Banno F."/>
            <person name="Bowser L."/>
            <person name="Brooks S.Y."/>
            <person name="Carninci P."/>
            <person name="Chao Q."/>
            <person name="Choy N."/>
            <person name="Enju A."/>
            <person name="Goldsmith A.D."/>
            <person name="Gurjal M."/>
            <person name="Hansen N.F."/>
            <person name="Hayashizaki Y."/>
            <person name="Johnson-Hopson C."/>
            <person name="Hsuan V.W."/>
            <person name="Iida K."/>
            <person name="Karnes M."/>
            <person name="Khan S."/>
            <person name="Koesema E."/>
            <person name="Ishida J."/>
            <person name="Jiang P.X."/>
            <person name="Jones T."/>
            <person name="Kawai J."/>
            <person name="Kamiya A."/>
            <person name="Meyers C."/>
            <person name="Nakajima M."/>
            <person name="Narusaka M."/>
            <person name="Seki M."/>
            <person name="Sakurai T."/>
            <person name="Satou M."/>
            <person name="Tamse R."/>
            <person name="Vaysberg M."/>
            <person name="Wallender E.K."/>
            <person name="Wong C."/>
            <person name="Yamamura Y."/>
            <person name="Yuan S."/>
            <person name="Shinozaki K."/>
            <person name="Davis R.W."/>
            <person name="Theologis A."/>
            <person name="Ecker J.R."/>
        </authorList>
    </citation>
    <scope>NUCLEOTIDE SEQUENCE [LARGE SCALE MRNA]</scope>
    <source>
        <strain>cv. Columbia</strain>
    </source>
</reference>
<protein>
    <recommendedName>
        <fullName>F-box protein At5g07670</fullName>
    </recommendedName>
</protein>
<proteinExistence type="evidence at transcript level"/>
<evidence type="ECO:0000255" key="1">
    <source>
        <dbReference type="PROSITE-ProRule" id="PRU00080"/>
    </source>
</evidence>
<evidence type="ECO:0000305" key="2"/>